<accession>Q3ZK63</accession>
<reference key="1">
    <citation type="journal article" date="2006" name="J. Virol.">
        <title>Full genomic analysis of human rotavirus strain B4106 and lapine rotavirus strain 30/96 provides evidence for interspecies transmission.</title>
        <authorList>
            <person name="Matthijnssens J."/>
            <person name="Rahman M."/>
            <person name="Martella V."/>
            <person name="Xuelei Y."/>
            <person name="De Vos S."/>
            <person name="De Leener K."/>
            <person name="Ciarlet M."/>
            <person name="Buonavoglia C."/>
            <person name="Van Ranst M."/>
        </authorList>
    </citation>
    <scope>NUCLEOTIDE SEQUENCE [GENOMIC RNA]</scope>
</reference>
<name>NSP3_ROT41</name>
<sequence>MLKMESTQQMASSIINTSFEAAVVAATSTLELMGIQYDYNEVYTRVKSKFDYVMDDSGVKNNLLGKAATIDQALNGKFGSAVRNRNWMTDTRTTARLDEDVNKLRMMLSSKGIDQKMRVLNACFSVKRIPGKSSSIIKCTRLMRDKIERGEVEVDDSFVEEKMEVDTIDWKSRYEQLEKRFESLKQRVNEKYTSWVQKAKKVNENMYSLQNVISQQQSQIADLQHYCNKLEVDLQNKISSLVSSIEWYMKSMELPDEVKTDIEQQLNSIDVINPINAIDDFESLIRNVILDYDRTFLMFKGLMRQCNYEYTYE</sequence>
<evidence type="ECO:0000255" key="1">
    <source>
        <dbReference type="HAMAP-Rule" id="MF_04094"/>
    </source>
</evidence>
<proteinExistence type="inferred from homology"/>
<organism>
    <name type="scientific">Rotavirus A (isolate RVA/Human/Belgium/B4106/2000/G3P11[14])</name>
    <name type="common">RV-A</name>
    <name type="synonym">Rotavirus A (isolate B4106)</name>
    <dbReference type="NCBI Taxonomy" id="578843"/>
    <lineage>
        <taxon>Viruses</taxon>
        <taxon>Riboviria</taxon>
        <taxon>Orthornavirae</taxon>
        <taxon>Duplornaviricota</taxon>
        <taxon>Resentoviricetes</taxon>
        <taxon>Reovirales</taxon>
        <taxon>Sedoreoviridae</taxon>
        <taxon>Rotavirus</taxon>
        <taxon>Rotavirus A</taxon>
    </lineage>
</organism>
<feature type="chain" id="PRO_0000369442" description="Non-structural protein 3">
    <location>
        <begin position="1"/>
        <end position="313"/>
    </location>
</feature>
<feature type="region of interest" description="RNA-binding" evidence="1">
    <location>
        <begin position="1"/>
        <end position="149"/>
    </location>
</feature>
<feature type="region of interest" description="Dimerization" evidence="1">
    <location>
        <begin position="150"/>
        <end position="206"/>
    </location>
</feature>
<feature type="region of interest" description="Interaction with host ZC3H7B" evidence="1">
    <location>
        <begin position="170"/>
        <end position="234"/>
    </location>
</feature>
<feature type="region of interest" description="Interaction with host EIF4G1" evidence="1">
    <location>
        <begin position="208"/>
        <end position="313"/>
    </location>
</feature>
<feature type="coiled-coil region" evidence="1">
    <location>
        <begin position="166"/>
        <end position="237"/>
    </location>
</feature>
<keyword id="KW-0175">Coiled coil</keyword>
<keyword id="KW-1035">Host cytoplasm</keyword>
<keyword id="KW-0945">Host-virus interaction</keyword>
<keyword id="KW-0694">RNA-binding</keyword>
<keyword id="KW-0810">Translation regulation</keyword>
<protein>
    <recommendedName>
        <fullName evidence="1">Non-structural protein 3</fullName>
        <shortName evidence="1">NSP3</shortName>
    </recommendedName>
    <alternativeName>
        <fullName evidence="1">NCVP4</fullName>
    </alternativeName>
    <alternativeName>
        <fullName evidence="1">Non-structural RNA-binding protein 34</fullName>
        <shortName evidence="1">NS34</shortName>
    </alternativeName>
</protein>
<dbReference type="EMBL" id="AY740733">
    <property type="protein sequence ID" value="AAU43791.1"/>
    <property type="molecule type" value="Genomic_RNA"/>
</dbReference>
<dbReference type="SMR" id="Q3ZK63"/>
<dbReference type="Proteomes" id="UP000008655">
    <property type="component" value="Genome"/>
</dbReference>
<dbReference type="GO" id="GO:0030430">
    <property type="term" value="C:host cell cytoplasm"/>
    <property type="evidence" value="ECO:0007669"/>
    <property type="project" value="UniProtKB-SubCell"/>
</dbReference>
<dbReference type="GO" id="GO:0003723">
    <property type="term" value="F:RNA binding"/>
    <property type="evidence" value="ECO:0007669"/>
    <property type="project" value="UniProtKB-UniRule"/>
</dbReference>
<dbReference type="GO" id="GO:0006417">
    <property type="term" value="P:regulation of translation"/>
    <property type="evidence" value="ECO:0007669"/>
    <property type="project" value="UniProtKB-UniRule"/>
</dbReference>
<dbReference type="CDD" id="cd20714">
    <property type="entry name" value="NSP3_rotavirus"/>
    <property type="match status" value="1"/>
</dbReference>
<dbReference type="Gene3D" id="3.30.70.1610">
    <property type="match status" value="1"/>
</dbReference>
<dbReference type="Gene3D" id="1.20.5.970">
    <property type="entry name" value="Nonstructural RNA-binding protein"/>
    <property type="match status" value="1"/>
</dbReference>
<dbReference type="Gene3D" id="6.10.280.20">
    <property type="entry name" value="Rotavirus non-structural protein NSP3, N-terminal domain"/>
    <property type="match status" value="1"/>
</dbReference>
<dbReference type="HAMAP" id="MF_04094">
    <property type="entry name" value="ROTA_A_NSP3"/>
    <property type="match status" value="1"/>
</dbReference>
<dbReference type="HAMAP" id="MF_04090">
    <property type="entry name" value="ROTA_NSP3"/>
    <property type="match status" value="1"/>
</dbReference>
<dbReference type="InterPro" id="IPR042519">
    <property type="entry name" value="NSP3_N_rotavirus"/>
</dbReference>
<dbReference type="InterPro" id="IPR036082">
    <property type="entry name" value="NSP3_sf"/>
</dbReference>
<dbReference type="InterPro" id="IPR002873">
    <property type="entry name" value="Rotavirus_NSP3"/>
</dbReference>
<dbReference type="Pfam" id="PF01665">
    <property type="entry name" value="Rota_NSP3"/>
    <property type="match status" value="1"/>
</dbReference>
<dbReference type="SUPFAM" id="SSF69903">
    <property type="entry name" value="NSP3 homodimer"/>
    <property type="match status" value="1"/>
</dbReference>
<dbReference type="SUPFAM" id="SSF58030">
    <property type="entry name" value="Rotavirus nonstructural proteins"/>
    <property type="match status" value="1"/>
</dbReference>
<organismHost>
    <name type="scientific">Homo sapiens</name>
    <name type="common">Human</name>
    <dbReference type="NCBI Taxonomy" id="9606"/>
</organismHost>
<comment type="function">
    <text evidence="1">Plays an important role in stimulating the translation of viral mRNAs. These mRNAs are capped but not polyadenylated, instead terminating in a conserved sequence 'GACC' at the 3' that is recognized by NSP3, which competes with host PABPC1 for EIF4G1 binding. The interaction between NSP3 and host EIF4G1 stabilizes the EIF4E-EIF4G1 interaction, thereby facilitating the initiation of capped mRNA translation.</text>
</comment>
<comment type="subunit">
    <text evidence="1">Homodimer. Interacts (via the coiled-coil region) with host ZC3H7B (via LD motif). Interacts with host EIF4G1.</text>
</comment>
<comment type="subcellular location">
    <subcellularLocation>
        <location evidence="1">Host cytoplasm</location>
    </subcellularLocation>
</comment>
<comment type="similarity">
    <text evidence="1">Belongs to the rotavirus NSP3 family.</text>
</comment>